<name>RL20_PECAS</name>
<keyword id="KW-1185">Reference proteome</keyword>
<keyword id="KW-0687">Ribonucleoprotein</keyword>
<keyword id="KW-0689">Ribosomal protein</keyword>
<keyword id="KW-0694">RNA-binding</keyword>
<keyword id="KW-0699">rRNA-binding</keyword>
<protein>
    <recommendedName>
        <fullName evidence="1">Large ribosomal subunit protein bL20</fullName>
    </recommendedName>
    <alternativeName>
        <fullName evidence="2">50S ribosomal protein L20</fullName>
    </alternativeName>
</protein>
<comment type="function">
    <text evidence="1">Binds directly to 23S ribosomal RNA and is necessary for the in vitro assembly process of the 50S ribosomal subunit. It is not involved in the protein synthesizing functions of that subunit.</text>
</comment>
<comment type="similarity">
    <text evidence="1">Belongs to the bacterial ribosomal protein bL20 family.</text>
</comment>
<proteinExistence type="inferred from homology"/>
<gene>
    <name evidence="1" type="primary">rplT</name>
    <name type="ordered locus">ECA2419</name>
</gene>
<feature type="chain" id="PRO_0000177160" description="Large ribosomal subunit protein bL20">
    <location>
        <begin position="1"/>
        <end position="118"/>
    </location>
</feature>
<sequence>MARVKRGVVARARHKKILKQAKGYYGARSRVYRVAFQAVIKAGQYAYRDRRQRKRQFRQLWIARINAAARQNGLSYSKFINGLKKASVEIDRKILADIAVFDKLAFSALVEKAKAALA</sequence>
<evidence type="ECO:0000255" key="1">
    <source>
        <dbReference type="HAMAP-Rule" id="MF_00382"/>
    </source>
</evidence>
<evidence type="ECO:0000305" key="2"/>
<reference key="1">
    <citation type="journal article" date="2004" name="Proc. Natl. Acad. Sci. U.S.A.">
        <title>Genome sequence of the enterobacterial phytopathogen Erwinia carotovora subsp. atroseptica and characterization of virulence factors.</title>
        <authorList>
            <person name="Bell K.S."/>
            <person name="Sebaihia M."/>
            <person name="Pritchard L."/>
            <person name="Holden M.T.G."/>
            <person name="Hyman L.J."/>
            <person name="Holeva M.C."/>
            <person name="Thomson N.R."/>
            <person name="Bentley S.D."/>
            <person name="Churcher L.J.C."/>
            <person name="Mungall K."/>
            <person name="Atkin R."/>
            <person name="Bason N."/>
            <person name="Brooks K."/>
            <person name="Chillingworth T."/>
            <person name="Clark K."/>
            <person name="Doggett J."/>
            <person name="Fraser A."/>
            <person name="Hance Z."/>
            <person name="Hauser H."/>
            <person name="Jagels K."/>
            <person name="Moule S."/>
            <person name="Norbertczak H."/>
            <person name="Ormond D."/>
            <person name="Price C."/>
            <person name="Quail M.A."/>
            <person name="Sanders M."/>
            <person name="Walker D."/>
            <person name="Whitehead S."/>
            <person name="Salmond G.P.C."/>
            <person name="Birch P.R.J."/>
            <person name="Parkhill J."/>
            <person name="Toth I.K."/>
        </authorList>
    </citation>
    <scope>NUCLEOTIDE SEQUENCE [LARGE SCALE GENOMIC DNA]</scope>
    <source>
        <strain>SCRI 1043 / ATCC BAA-672</strain>
    </source>
</reference>
<dbReference type="EMBL" id="BX950851">
    <property type="protein sequence ID" value="CAG75322.1"/>
    <property type="molecule type" value="Genomic_DNA"/>
</dbReference>
<dbReference type="RefSeq" id="WP_005968887.1">
    <property type="nucleotide sequence ID" value="NC_004547.2"/>
</dbReference>
<dbReference type="SMR" id="Q6D4H1"/>
<dbReference type="STRING" id="218491.ECA2419"/>
<dbReference type="GeneID" id="93390135"/>
<dbReference type="KEGG" id="eca:ECA2419"/>
<dbReference type="eggNOG" id="COG0292">
    <property type="taxonomic scope" value="Bacteria"/>
</dbReference>
<dbReference type="HOGENOM" id="CLU_123265_0_1_6"/>
<dbReference type="OrthoDB" id="9808966at2"/>
<dbReference type="Proteomes" id="UP000007966">
    <property type="component" value="Chromosome"/>
</dbReference>
<dbReference type="GO" id="GO:1990904">
    <property type="term" value="C:ribonucleoprotein complex"/>
    <property type="evidence" value="ECO:0007669"/>
    <property type="project" value="UniProtKB-KW"/>
</dbReference>
<dbReference type="GO" id="GO:0005840">
    <property type="term" value="C:ribosome"/>
    <property type="evidence" value="ECO:0007669"/>
    <property type="project" value="UniProtKB-KW"/>
</dbReference>
<dbReference type="GO" id="GO:0019843">
    <property type="term" value="F:rRNA binding"/>
    <property type="evidence" value="ECO:0007669"/>
    <property type="project" value="UniProtKB-UniRule"/>
</dbReference>
<dbReference type="GO" id="GO:0003735">
    <property type="term" value="F:structural constituent of ribosome"/>
    <property type="evidence" value="ECO:0007669"/>
    <property type="project" value="InterPro"/>
</dbReference>
<dbReference type="GO" id="GO:0000027">
    <property type="term" value="P:ribosomal large subunit assembly"/>
    <property type="evidence" value="ECO:0007669"/>
    <property type="project" value="UniProtKB-UniRule"/>
</dbReference>
<dbReference type="GO" id="GO:0006412">
    <property type="term" value="P:translation"/>
    <property type="evidence" value="ECO:0007669"/>
    <property type="project" value="InterPro"/>
</dbReference>
<dbReference type="CDD" id="cd07026">
    <property type="entry name" value="Ribosomal_L20"/>
    <property type="match status" value="1"/>
</dbReference>
<dbReference type="FunFam" id="1.10.1900.20:FF:000001">
    <property type="entry name" value="50S ribosomal protein L20"/>
    <property type="match status" value="1"/>
</dbReference>
<dbReference type="Gene3D" id="6.10.160.10">
    <property type="match status" value="1"/>
</dbReference>
<dbReference type="Gene3D" id="1.10.1900.20">
    <property type="entry name" value="Ribosomal protein L20"/>
    <property type="match status" value="1"/>
</dbReference>
<dbReference type="HAMAP" id="MF_00382">
    <property type="entry name" value="Ribosomal_bL20"/>
    <property type="match status" value="1"/>
</dbReference>
<dbReference type="InterPro" id="IPR005813">
    <property type="entry name" value="Ribosomal_bL20"/>
</dbReference>
<dbReference type="InterPro" id="IPR049946">
    <property type="entry name" value="RIBOSOMAL_L20_CS"/>
</dbReference>
<dbReference type="InterPro" id="IPR035566">
    <property type="entry name" value="Ribosomal_protein_bL20_C"/>
</dbReference>
<dbReference type="NCBIfam" id="TIGR01032">
    <property type="entry name" value="rplT_bact"/>
    <property type="match status" value="1"/>
</dbReference>
<dbReference type="PANTHER" id="PTHR10986">
    <property type="entry name" value="39S RIBOSOMAL PROTEIN L20"/>
    <property type="match status" value="1"/>
</dbReference>
<dbReference type="Pfam" id="PF00453">
    <property type="entry name" value="Ribosomal_L20"/>
    <property type="match status" value="1"/>
</dbReference>
<dbReference type="PRINTS" id="PR00062">
    <property type="entry name" value="RIBOSOMALL20"/>
</dbReference>
<dbReference type="SUPFAM" id="SSF74731">
    <property type="entry name" value="Ribosomal protein L20"/>
    <property type="match status" value="1"/>
</dbReference>
<dbReference type="PROSITE" id="PS00937">
    <property type="entry name" value="RIBOSOMAL_L20"/>
    <property type="match status" value="1"/>
</dbReference>
<organism>
    <name type="scientific">Pectobacterium atrosepticum (strain SCRI 1043 / ATCC BAA-672)</name>
    <name type="common">Erwinia carotovora subsp. atroseptica</name>
    <dbReference type="NCBI Taxonomy" id="218491"/>
    <lineage>
        <taxon>Bacteria</taxon>
        <taxon>Pseudomonadati</taxon>
        <taxon>Pseudomonadota</taxon>
        <taxon>Gammaproteobacteria</taxon>
        <taxon>Enterobacterales</taxon>
        <taxon>Pectobacteriaceae</taxon>
        <taxon>Pectobacterium</taxon>
    </lineage>
</organism>
<accession>Q6D4H1</accession>